<gene>
    <name evidence="1" type="primary">rplW</name>
    <name type="ordered locus">BOV_1194</name>
</gene>
<proteinExistence type="inferred from homology"/>
<keyword id="KW-0687">Ribonucleoprotein</keyword>
<keyword id="KW-0689">Ribosomal protein</keyword>
<keyword id="KW-0694">RNA-binding</keyword>
<keyword id="KW-0699">rRNA-binding</keyword>
<comment type="function">
    <text evidence="1">One of the early assembly proteins it binds 23S rRNA. One of the proteins that surrounds the polypeptide exit tunnel on the outside of the ribosome. Forms the main docking site for trigger factor binding to the ribosome.</text>
</comment>
<comment type="subunit">
    <text evidence="1">Part of the 50S ribosomal subunit. Contacts protein L29, and trigger factor when it is bound to the ribosome.</text>
</comment>
<comment type="similarity">
    <text evidence="1">Belongs to the universal ribosomal protein uL23 family.</text>
</comment>
<dbReference type="EMBL" id="CP000708">
    <property type="protein sequence ID" value="ABQ61591.1"/>
    <property type="molecule type" value="Genomic_DNA"/>
</dbReference>
<dbReference type="RefSeq" id="WP_004689765.1">
    <property type="nucleotide sequence ID" value="NC_009505.1"/>
</dbReference>
<dbReference type="SMR" id="A5VR04"/>
<dbReference type="KEGG" id="bov:BOV_1194"/>
<dbReference type="HOGENOM" id="CLU_037562_3_1_5"/>
<dbReference type="Proteomes" id="UP000006383">
    <property type="component" value="Chromosome I"/>
</dbReference>
<dbReference type="GO" id="GO:1990904">
    <property type="term" value="C:ribonucleoprotein complex"/>
    <property type="evidence" value="ECO:0007669"/>
    <property type="project" value="UniProtKB-KW"/>
</dbReference>
<dbReference type="GO" id="GO:0005840">
    <property type="term" value="C:ribosome"/>
    <property type="evidence" value="ECO:0007669"/>
    <property type="project" value="UniProtKB-KW"/>
</dbReference>
<dbReference type="GO" id="GO:0019843">
    <property type="term" value="F:rRNA binding"/>
    <property type="evidence" value="ECO:0007669"/>
    <property type="project" value="UniProtKB-UniRule"/>
</dbReference>
<dbReference type="GO" id="GO:0003735">
    <property type="term" value="F:structural constituent of ribosome"/>
    <property type="evidence" value="ECO:0007669"/>
    <property type="project" value="InterPro"/>
</dbReference>
<dbReference type="GO" id="GO:0006412">
    <property type="term" value="P:translation"/>
    <property type="evidence" value="ECO:0007669"/>
    <property type="project" value="UniProtKB-UniRule"/>
</dbReference>
<dbReference type="FunFam" id="3.30.70.330:FF:000001">
    <property type="entry name" value="50S ribosomal protein L23"/>
    <property type="match status" value="1"/>
</dbReference>
<dbReference type="Gene3D" id="3.30.70.330">
    <property type="match status" value="1"/>
</dbReference>
<dbReference type="HAMAP" id="MF_01369_B">
    <property type="entry name" value="Ribosomal_uL23_B"/>
    <property type="match status" value="1"/>
</dbReference>
<dbReference type="InterPro" id="IPR012677">
    <property type="entry name" value="Nucleotide-bd_a/b_plait_sf"/>
</dbReference>
<dbReference type="InterPro" id="IPR013025">
    <property type="entry name" value="Ribosomal_uL23-like"/>
</dbReference>
<dbReference type="InterPro" id="IPR012678">
    <property type="entry name" value="Ribosomal_uL23/eL15/eS24_sf"/>
</dbReference>
<dbReference type="NCBIfam" id="NF004359">
    <property type="entry name" value="PRK05738.1-3"/>
    <property type="match status" value="1"/>
</dbReference>
<dbReference type="NCBIfam" id="NF004360">
    <property type="entry name" value="PRK05738.1-5"/>
    <property type="match status" value="1"/>
</dbReference>
<dbReference type="NCBIfam" id="NF004363">
    <property type="entry name" value="PRK05738.2-4"/>
    <property type="match status" value="1"/>
</dbReference>
<dbReference type="PANTHER" id="PTHR11620">
    <property type="entry name" value="60S RIBOSOMAL PROTEIN L23A"/>
    <property type="match status" value="1"/>
</dbReference>
<dbReference type="Pfam" id="PF00276">
    <property type="entry name" value="Ribosomal_L23"/>
    <property type="match status" value="1"/>
</dbReference>
<dbReference type="SUPFAM" id="SSF54189">
    <property type="entry name" value="Ribosomal proteins S24e, L23 and L15e"/>
    <property type="match status" value="1"/>
</dbReference>
<protein>
    <recommendedName>
        <fullName evidence="1">Large ribosomal subunit protein uL23</fullName>
    </recommendedName>
    <alternativeName>
        <fullName evidence="2">50S ribosomal protein L23</fullName>
    </alternativeName>
</protein>
<accession>A5VR04</accession>
<name>RL23_BRUO2</name>
<feature type="chain" id="PRO_1000068044" description="Large ribosomal subunit protein uL23">
    <location>
        <begin position="1"/>
        <end position="97"/>
    </location>
</feature>
<sequence length="97" mass="10535">MTDLRHYDVIVSPVITEKSTMVSEHNQVVFNVARKATKPEIKAAVEALFGVKVTAVNTAVRKGKVKRFRGLVGRQSDVKKAIVTLAEGQSIDVSTGL</sequence>
<organism>
    <name type="scientific">Brucella ovis (strain ATCC 25840 / 63/290 / NCTC 10512)</name>
    <dbReference type="NCBI Taxonomy" id="444178"/>
    <lineage>
        <taxon>Bacteria</taxon>
        <taxon>Pseudomonadati</taxon>
        <taxon>Pseudomonadota</taxon>
        <taxon>Alphaproteobacteria</taxon>
        <taxon>Hyphomicrobiales</taxon>
        <taxon>Brucellaceae</taxon>
        <taxon>Brucella/Ochrobactrum group</taxon>
        <taxon>Brucella</taxon>
    </lineage>
</organism>
<evidence type="ECO:0000255" key="1">
    <source>
        <dbReference type="HAMAP-Rule" id="MF_01369"/>
    </source>
</evidence>
<evidence type="ECO:0000305" key="2"/>
<reference key="1">
    <citation type="journal article" date="2009" name="PLoS ONE">
        <title>Genome degradation in Brucella ovis corresponds with narrowing of its host range and tissue tropism.</title>
        <authorList>
            <person name="Tsolis R.M."/>
            <person name="Seshadri R."/>
            <person name="Santos R.L."/>
            <person name="Sangari F.J."/>
            <person name="Lobo J.M."/>
            <person name="de Jong M.F."/>
            <person name="Ren Q."/>
            <person name="Myers G."/>
            <person name="Brinkac L.M."/>
            <person name="Nelson W.C."/>
            <person name="Deboy R.T."/>
            <person name="Angiuoli S."/>
            <person name="Khouri H."/>
            <person name="Dimitrov G."/>
            <person name="Robinson J.R."/>
            <person name="Mulligan S."/>
            <person name="Walker R.L."/>
            <person name="Elzer P.E."/>
            <person name="Hassan K.A."/>
            <person name="Paulsen I.T."/>
        </authorList>
    </citation>
    <scope>NUCLEOTIDE SEQUENCE [LARGE SCALE GENOMIC DNA]</scope>
    <source>
        <strain>ATCC 25840 / 63/290 / NCTC 10512</strain>
    </source>
</reference>